<dbReference type="EC" id="3.1.-.-" evidence="1"/>
<dbReference type="EMBL" id="CP001101">
    <property type="protein sequence ID" value="ACE03915.1"/>
    <property type="molecule type" value="Genomic_DNA"/>
</dbReference>
<dbReference type="SMR" id="B3EPY3"/>
<dbReference type="STRING" id="331678.Cphamn1_0971"/>
<dbReference type="KEGG" id="cpb:Cphamn1_0971"/>
<dbReference type="eggNOG" id="COG0319">
    <property type="taxonomic scope" value="Bacteria"/>
</dbReference>
<dbReference type="HOGENOM" id="CLU_106710_3_3_10"/>
<dbReference type="OrthoDB" id="9811984at2"/>
<dbReference type="GO" id="GO:0005737">
    <property type="term" value="C:cytoplasm"/>
    <property type="evidence" value="ECO:0007669"/>
    <property type="project" value="UniProtKB-SubCell"/>
</dbReference>
<dbReference type="GO" id="GO:0004222">
    <property type="term" value="F:metalloendopeptidase activity"/>
    <property type="evidence" value="ECO:0007669"/>
    <property type="project" value="InterPro"/>
</dbReference>
<dbReference type="GO" id="GO:0004521">
    <property type="term" value="F:RNA endonuclease activity"/>
    <property type="evidence" value="ECO:0007669"/>
    <property type="project" value="UniProtKB-UniRule"/>
</dbReference>
<dbReference type="GO" id="GO:0008270">
    <property type="term" value="F:zinc ion binding"/>
    <property type="evidence" value="ECO:0007669"/>
    <property type="project" value="UniProtKB-UniRule"/>
</dbReference>
<dbReference type="GO" id="GO:0006364">
    <property type="term" value="P:rRNA processing"/>
    <property type="evidence" value="ECO:0007669"/>
    <property type="project" value="UniProtKB-UniRule"/>
</dbReference>
<dbReference type="Gene3D" id="3.40.390.30">
    <property type="entry name" value="Metalloproteases ('zincins'), catalytic domain"/>
    <property type="match status" value="1"/>
</dbReference>
<dbReference type="HAMAP" id="MF_00009">
    <property type="entry name" value="Endoribonucl_YbeY"/>
    <property type="match status" value="1"/>
</dbReference>
<dbReference type="InterPro" id="IPR023091">
    <property type="entry name" value="MetalPrtase_cat_dom_sf_prd"/>
</dbReference>
<dbReference type="InterPro" id="IPR002036">
    <property type="entry name" value="YbeY"/>
</dbReference>
<dbReference type="InterPro" id="IPR020549">
    <property type="entry name" value="YbeY_CS"/>
</dbReference>
<dbReference type="NCBIfam" id="TIGR00043">
    <property type="entry name" value="rRNA maturation RNase YbeY"/>
    <property type="match status" value="1"/>
</dbReference>
<dbReference type="Pfam" id="PF02130">
    <property type="entry name" value="YbeY"/>
    <property type="match status" value="1"/>
</dbReference>
<dbReference type="SUPFAM" id="SSF55486">
    <property type="entry name" value="Metalloproteases ('zincins'), catalytic domain"/>
    <property type="match status" value="1"/>
</dbReference>
<dbReference type="PROSITE" id="PS01306">
    <property type="entry name" value="UPF0054"/>
    <property type="match status" value="1"/>
</dbReference>
<organism>
    <name type="scientific">Chlorobium phaeobacteroides (strain BS1)</name>
    <dbReference type="NCBI Taxonomy" id="331678"/>
    <lineage>
        <taxon>Bacteria</taxon>
        <taxon>Pseudomonadati</taxon>
        <taxon>Chlorobiota</taxon>
        <taxon>Chlorobiia</taxon>
        <taxon>Chlorobiales</taxon>
        <taxon>Chlorobiaceae</taxon>
        <taxon>Chlorobium/Pelodictyon group</taxon>
        <taxon>Chlorobium</taxon>
    </lineage>
</organism>
<proteinExistence type="inferred from homology"/>
<sequence>MSLELYNTTKRVIPEEKLERVIRHVIEAEGFVPDVVVAVFCGDRLIQRINREHLGHDYATDTITFRYNSGREIEGEFYVSLDVIDKNSRRFKTGFENELFRVAIHSALHLAGYDDSGDEARAGMKKREDRYLSQLPSL</sequence>
<protein>
    <recommendedName>
        <fullName evidence="1">Endoribonuclease YbeY</fullName>
        <ecNumber evidence="1">3.1.-.-</ecNumber>
    </recommendedName>
</protein>
<feature type="chain" id="PRO_1000089161" description="Endoribonuclease YbeY">
    <location>
        <begin position="1"/>
        <end position="138"/>
    </location>
</feature>
<feature type="binding site" evidence="1">
    <location>
        <position position="105"/>
    </location>
    <ligand>
        <name>Zn(2+)</name>
        <dbReference type="ChEBI" id="CHEBI:29105"/>
        <note>catalytic</note>
    </ligand>
</feature>
<feature type="binding site" evidence="1">
    <location>
        <position position="109"/>
    </location>
    <ligand>
        <name>Zn(2+)</name>
        <dbReference type="ChEBI" id="CHEBI:29105"/>
        <note>catalytic</note>
    </ligand>
</feature>
<feature type="binding site" evidence="1">
    <location>
        <position position="115"/>
    </location>
    <ligand>
        <name>Zn(2+)</name>
        <dbReference type="ChEBI" id="CHEBI:29105"/>
        <note>catalytic</note>
    </ligand>
</feature>
<evidence type="ECO:0000255" key="1">
    <source>
        <dbReference type="HAMAP-Rule" id="MF_00009"/>
    </source>
</evidence>
<reference key="1">
    <citation type="submission" date="2008-06" db="EMBL/GenBank/DDBJ databases">
        <title>Complete sequence of Chlorobium phaeobacteroides BS1.</title>
        <authorList>
            <consortium name="US DOE Joint Genome Institute"/>
            <person name="Lucas S."/>
            <person name="Copeland A."/>
            <person name="Lapidus A."/>
            <person name="Glavina del Rio T."/>
            <person name="Dalin E."/>
            <person name="Tice H."/>
            <person name="Bruce D."/>
            <person name="Goodwin L."/>
            <person name="Pitluck S."/>
            <person name="Schmutz J."/>
            <person name="Larimer F."/>
            <person name="Land M."/>
            <person name="Hauser L."/>
            <person name="Kyrpides N."/>
            <person name="Ovchinnikova G."/>
            <person name="Li T."/>
            <person name="Liu Z."/>
            <person name="Zhao F."/>
            <person name="Overmann J."/>
            <person name="Bryant D.A."/>
            <person name="Richardson P."/>
        </authorList>
    </citation>
    <scope>NUCLEOTIDE SEQUENCE [LARGE SCALE GENOMIC DNA]</scope>
    <source>
        <strain>BS1</strain>
    </source>
</reference>
<comment type="function">
    <text evidence="1">Single strand-specific metallo-endoribonuclease involved in late-stage 70S ribosome quality control and in maturation of the 3' terminus of the 16S rRNA.</text>
</comment>
<comment type="cofactor">
    <cofactor evidence="1">
        <name>Zn(2+)</name>
        <dbReference type="ChEBI" id="CHEBI:29105"/>
    </cofactor>
    <text evidence="1">Binds 1 zinc ion.</text>
</comment>
<comment type="subcellular location">
    <subcellularLocation>
        <location evidence="1">Cytoplasm</location>
    </subcellularLocation>
</comment>
<comment type="similarity">
    <text evidence="1">Belongs to the endoribonuclease YbeY family.</text>
</comment>
<gene>
    <name evidence="1" type="primary">ybeY</name>
    <name type="ordered locus">Cphamn1_0971</name>
</gene>
<keyword id="KW-0963">Cytoplasm</keyword>
<keyword id="KW-0255">Endonuclease</keyword>
<keyword id="KW-0378">Hydrolase</keyword>
<keyword id="KW-0479">Metal-binding</keyword>
<keyword id="KW-0540">Nuclease</keyword>
<keyword id="KW-0690">Ribosome biogenesis</keyword>
<keyword id="KW-0698">rRNA processing</keyword>
<keyword id="KW-0862">Zinc</keyword>
<accession>B3EPY3</accession>
<name>YBEY_CHLPB</name>